<dbReference type="EMBL" id="AF007261">
    <property type="protein sequence ID" value="AAD11861.1"/>
    <property type="molecule type" value="Genomic_DNA"/>
</dbReference>
<dbReference type="PIR" id="S78128">
    <property type="entry name" value="S78128"/>
</dbReference>
<dbReference type="RefSeq" id="NP_044746.1">
    <property type="nucleotide sequence ID" value="NC_001823.1"/>
</dbReference>
<dbReference type="SMR" id="O21234"/>
<dbReference type="GeneID" id="801114"/>
<dbReference type="GO" id="GO:0005762">
    <property type="term" value="C:mitochondrial large ribosomal subunit"/>
    <property type="evidence" value="ECO:0007669"/>
    <property type="project" value="TreeGrafter"/>
</dbReference>
<dbReference type="GO" id="GO:0070180">
    <property type="term" value="F:large ribosomal subunit rRNA binding"/>
    <property type="evidence" value="ECO:0007669"/>
    <property type="project" value="TreeGrafter"/>
</dbReference>
<dbReference type="GO" id="GO:0003735">
    <property type="term" value="F:structural constituent of ribosome"/>
    <property type="evidence" value="ECO:0007669"/>
    <property type="project" value="InterPro"/>
</dbReference>
<dbReference type="GO" id="GO:0006412">
    <property type="term" value="P:translation"/>
    <property type="evidence" value="ECO:0007669"/>
    <property type="project" value="InterPro"/>
</dbReference>
<dbReference type="CDD" id="cd00349">
    <property type="entry name" value="Ribosomal_L11"/>
    <property type="match status" value="1"/>
</dbReference>
<dbReference type="FunFam" id="3.30.1550.10:FF:000005">
    <property type="entry name" value="50S ribosomal protein L11"/>
    <property type="match status" value="1"/>
</dbReference>
<dbReference type="Gene3D" id="1.10.10.250">
    <property type="entry name" value="Ribosomal protein L11, C-terminal domain"/>
    <property type="match status" value="1"/>
</dbReference>
<dbReference type="Gene3D" id="3.30.1550.10">
    <property type="entry name" value="Ribosomal protein L11/L12, N-terminal domain"/>
    <property type="match status" value="1"/>
</dbReference>
<dbReference type="HAMAP" id="MF_00736">
    <property type="entry name" value="Ribosomal_uL11"/>
    <property type="match status" value="1"/>
</dbReference>
<dbReference type="InterPro" id="IPR000911">
    <property type="entry name" value="Ribosomal_uL11"/>
</dbReference>
<dbReference type="InterPro" id="IPR006519">
    <property type="entry name" value="Ribosomal_uL11_bac-typ"/>
</dbReference>
<dbReference type="InterPro" id="IPR020783">
    <property type="entry name" value="Ribosomal_uL11_C"/>
</dbReference>
<dbReference type="InterPro" id="IPR036769">
    <property type="entry name" value="Ribosomal_uL11_C_sf"/>
</dbReference>
<dbReference type="InterPro" id="IPR020784">
    <property type="entry name" value="Ribosomal_uL11_N"/>
</dbReference>
<dbReference type="InterPro" id="IPR036796">
    <property type="entry name" value="Ribosomal_uL11_N_sf"/>
</dbReference>
<dbReference type="NCBIfam" id="TIGR01632">
    <property type="entry name" value="L11_bact"/>
    <property type="match status" value="1"/>
</dbReference>
<dbReference type="PANTHER" id="PTHR11661">
    <property type="entry name" value="60S RIBOSOMAL PROTEIN L12"/>
    <property type="match status" value="1"/>
</dbReference>
<dbReference type="PANTHER" id="PTHR11661:SF1">
    <property type="entry name" value="LARGE RIBOSOMAL SUBUNIT PROTEIN UL11M"/>
    <property type="match status" value="1"/>
</dbReference>
<dbReference type="Pfam" id="PF00298">
    <property type="entry name" value="Ribosomal_L11"/>
    <property type="match status" value="1"/>
</dbReference>
<dbReference type="Pfam" id="PF03946">
    <property type="entry name" value="Ribosomal_L11_N"/>
    <property type="match status" value="1"/>
</dbReference>
<dbReference type="SMART" id="SM00649">
    <property type="entry name" value="RL11"/>
    <property type="match status" value="1"/>
</dbReference>
<dbReference type="SUPFAM" id="SSF54747">
    <property type="entry name" value="Ribosomal L11/L12e N-terminal domain"/>
    <property type="match status" value="1"/>
</dbReference>
<dbReference type="SUPFAM" id="SSF46906">
    <property type="entry name" value="Ribosomal protein L11, C-terminal domain"/>
    <property type="match status" value="1"/>
</dbReference>
<evidence type="ECO:0000305" key="1"/>
<organism>
    <name type="scientific">Reclinomonas americana</name>
    <dbReference type="NCBI Taxonomy" id="48483"/>
    <lineage>
        <taxon>Eukaryota</taxon>
        <taxon>Discoba</taxon>
        <taxon>Jakobida</taxon>
        <taxon>Histionina</taxon>
        <taxon>Histionidae</taxon>
        <taxon>Reclinomonas</taxon>
    </lineage>
</organism>
<comment type="subcellular location">
    <subcellularLocation>
        <location>Mitochondrion</location>
    </subcellularLocation>
</comment>
<comment type="similarity">
    <text evidence="1">Belongs to the universal ribosomal protein uL11 family.</text>
</comment>
<gene>
    <name type="primary">RPL11</name>
</gene>
<feature type="chain" id="PRO_0000104453" description="Large ribosomal subunit protein uL11m">
    <location>
        <begin position="1"/>
        <end position="145"/>
    </location>
</feature>
<sequence>MNKIIGFIRLEIESGKASPSPPVGPALGLRGVNIMQFCKEFNNRCKQLNIKDGVPVPTIITVYDDKTFSFKMKTPSITYFIKKHLEISKGASKPGKENFLNIDIRSLYEIAEIKKIDSNLDIKSICKSLIGSVKSMGIKTIIVKN</sequence>
<keyword id="KW-0496">Mitochondrion</keyword>
<keyword id="KW-0687">Ribonucleoprotein</keyword>
<keyword id="KW-0689">Ribosomal protein</keyword>
<reference key="1">
    <citation type="journal article" date="1997" name="Nature">
        <title>An ancestral mitochondrial DNA resembling a eubacterial genome in miniature.</title>
        <authorList>
            <person name="Lang B.F."/>
            <person name="Burger G."/>
            <person name="O'Kelly C.J."/>
            <person name="Cedergren R."/>
            <person name="Golding G.B."/>
            <person name="Lemieux C."/>
            <person name="Sankoff D."/>
            <person name="Turmel M."/>
            <person name="Gray M.W."/>
        </authorList>
    </citation>
    <scope>NUCLEOTIDE SEQUENCE [GENOMIC DNA]</scope>
    <source>
        <strain>ATCC 50394</strain>
    </source>
</reference>
<geneLocation type="mitochondrion"/>
<accession>O21234</accession>
<proteinExistence type="inferred from homology"/>
<protein>
    <recommendedName>
        <fullName evidence="1">Large ribosomal subunit protein uL11m</fullName>
    </recommendedName>
    <alternativeName>
        <fullName>60S ribosomal protein L11, mitochondrial</fullName>
    </alternativeName>
</protein>
<name>RM11_RECAM</name>